<protein>
    <recommendedName>
        <fullName>Thermostable direct hemolysin</fullName>
    </recommendedName>
</protein>
<name>HLY_VIBMI</name>
<comment type="function">
    <text>Bacterial hemolysins are exotoxins that attack blood cell membranes and cause cell rupture by mechanisms not clearly defined.</text>
</comment>
<comment type="subunit">
    <text>Homodimer.</text>
</comment>
<comment type="similarity">
    <text evidence="2">Belongs to the TDH hemolysin family.</text>
</comment>
<sequence length="189" mass="21513">MKYQYFAKKSFLFISMLAAFKTFAFELPSVPFPAPGSDEILFVVRDTTFNTKAPVNVKVSDFWTNRDVKRKPYEDVYGQSVFTTSGTKWLTSYMTVNINDKDYTMAAVSGYKSGHSAVFVKSDQVQLQHSYNSVANFVGEDEDSIPSKMYLDETPEYFVNVEAYESGSGNVLVMCISNKESFFECEHQR</sequence>
<organism>
    <name type="scientific">Vibrio mimicus</name>
    <dbReference type="NCBI Taxonomy" id="674"/>
    <lineage>
        <taxon>Bacteria</taxon>
        <taxon>Pseudomonadati</taxon>
        <taxon>Pseudomonadota</taxon>
        <taxon>Gammaproteobacteria</taxon>
        <taxon>Vibrionales</taxon>
        <taxon>Vibrionaceae</taxon>
        <taxon>Vibrio</taxon>
    </lineage>
</organism>
<keyword id="KW-0204">Cytolysis</keyword>
<keyword id="KW-1015">Disulfide bond</keyword>
<keyword id="KW-0354">Hemolysis</keyword>
<keyword id="KW-0732">Signal</keyword>
<keyword id="KW-0800">Toxin</keyword>
<keyword id="KW-0843">Virulence</keyword>
<proteinExistence type="inferred from homology"/>
<accession>P28030</accession>
<reference key="1">
    <citation type="journal article" date="1991" name="J. Bacteriol.">
        <title>Evidence for insertion sequence-mediated spread of the thermostable direct hemolysin gene among Vibrio species.</title>
        <authorList>
            <person name="Terai A."/>
            <person name="Baba K."/>
            <person name="Shirai H."/>
            <person name="Yoshida O."/>
            <person name="Takeda Y."/>
            <person name="Nishibuchi M."/>
        </authorList>
    </citation>
    <scope>NUCLEOTIDE SEQUENCE [GENOMIC DNA]</scope>
</reference>
<feature type="signal peptide" evidence="1">
    <location>
        <begin position="1"/>
        <end position="24"/>
    </location>
</feature>
<feature type="chain" id="PRO_0000013364" description="Thermostable direct hemolysin">
    <location>
        <begin position="25"/>
        <end position="189"/>
    </location>
</feature>
<feature type="disulfide bond" evidence="1">
    <location>
        <begin position="175"/>
        <end position="185"/>
    </location>
</feature>
<evidence type="ECO:0000250" key="1"/>
<evidence type="ECO:0000305" key="2"/>
<dbReference type="EMBL" id="M64120">
    <property type="protein sequence ID" value="AAA27571.1"/>
    <property type="molecule type" value="Genomic_DNA"/>
</dbReference>
<dbReference type="RefSeq" id="WP_148547272.1">
    <property type="nucleotide sequence ID" value="NZ_CAWOXN010000015.1"/>
</dbReference>
<dbReference type="SMR" id="P28030"/>
<dbReference type="GO" id="GO:0005576">
    <property type="term" value="C:extracellular region"/>
    <property type="evidence" value="ECO:0007669"/>
    <property type="project" value="InterPro"/>
</dbReference>
<dbReference type="GO" id="GO:0090729">
    <property type="term" value="F:toxin activity"/>
    <property type="evidence" value="ECO:0007669"/>
    <property type="project" value="UniProtKB-KW"/>
</dbReference>
<dbReference type="GO" id="GO:0019836">
    <property type="term" value="P:symbiont-mediated hemolysis of host erythrocyte"/>
    <property type="evidence" value="ECO:0007669"/>
    <property type="project" value="InterPro"/>
</dbReference>
<dbReference type="Gene3D" id="2.60.270.30">
    <property type="entry name" value="Vibrio parahaemolyticus thermostable direct hemolysin"/>
    <property type="match status" value="1"/>
</dbReference>
<dbReference type="InterPro" id="IPR038689">
    <property type="entry name" value="TDH_sf"/>
</dbReference>
<dbReference type="InterPro" id="IPR005015">
    <property type="entry name" value="Thermostable_hemolysn_vibrio"/>
</dbReference>
<dbReference type="Pfam" id="PF03347">
    <property type="entry name" value="TDH"/>
    <property type="match status" value="1"/>
</dbReference>
<gene>
    <name type="primary">tdh</name>
</gene>